<evidence type="ECO:0000255" key="1">
    <source>
        <dbReference type="HAMAP-Rule" id="MF_00067"/>
    </source>
</evidence>
<organism>
    <name type="scientific">Buchnera aphidicola subsp. Schizaphis graminum (strain Sg)</name>
    <dbReference type="NCBI Taxonomy" id="198804"/>
    <lineage>
        <taxon>Bacteria</taxon>
        <taxon>Pseudomonadati</taxon>
        <taxon>Pseudomonadota</taxon>
        <taxon>Gammaproteobacteria</taxon>
        <taxon>Enterobacterales</taxon>
        <taxon>Erwiniaceae</taxon>
        <taxon>Buchnera</taxon>
    </lineage>
</organism>
<gene>
    <name evidence="1" type="primary">gmhA</name>
    <name type="synonym">lpcA</name>
    <name type="ordered locus">BUsg_241</name>
</gene>
<reference key="1">
    <citation type="journal article" date="2002" name="Science">
        <title>50 million years of genomic stasis in endosymbiotic bacteria.</title>
        <authorList>
            <person name="Tamas I."/>
            <person name="Klasson L."/>
            <person name="Canbaeck B."/>
            <person name="Naeslund A.K."/>
            <person name="Eriksson A.-S."/>
            <person name="Wernegreen J.J."/>
            <person name="Sandstroem J.P."/>
            <person name="Moran N.A."/>
            <person name="Andersson S.G.E."/>
        </authorList>
    </citation>
    <scope>NUCLEOTIDE SEQUENCE [LARGE SCALE GENOMIC DNA]</scope>
    <source>
        <strain>Sg</strain>
    </source>
</reference>
<accession>Q8K9R9</accession>
<feature type="chain" id="PRO_0000136519" description="Phosphoheptose isomerase">
    <location>
        <begin position="1"/>
        <end position="194"/>
    </location>
</feature>
<feature type="domain" description="SIS" evidence="1">
    <location>
        <begin position="37"/>
        <end position="194"/>
    </location>
</feature>
<feature type="binding site" evidence="1">
    <location>
        <begin position="52"/>
        <end position="54"/>
    </location>
    <ligand>
        <name>substrate</name>
    </ligand>
</feature>
<feature type="binding site" evidence="1">
    <location>
        <position position="61"/>
    </location>
    <ligand>
        <name>Zn(2+)</name>
        <dbReference type="ChEBI" id="CHEBI:29105"/>
    </ligand>
</feature>
<feature type="binding site" evidence="1">
    <location>
        <position position="65"/>
    </location>
    <ligand>
        <name>substrate</name>
    </ligand>
</feature>
<feature type="binding site" evidence="1">
    <location>
        <position position="65"/>
    </location>
    <ligand>
        <name>Zn(2+)</name>
        <dbReference type="ChEBI" id="CHEBI:29105"/>
    </ligand>
</feature>
<feature type="binding site" evidence="1">
    <location>
        <begin position="93"/>
        <end position="94"/>
    </location>
    <ligand>
        <name>substrate</name>
    </ligand>
</feature>
<feature type="binding site" evidence="1">
    <location>
        <begin position="119"/>
        <end position="121"/>
    </location>
    <ligand>
        <name>substrate</name>
    </ligand>
</feature>
<feature type="binding site" evidence="1">
    <location>
        <position position="124"/>
    </location>
    <ligand>
        <name>substrate</name>
    </ligand>
</feature>
<feature type="binding site" evidence="1">
    <location>
        <position position="172"/>
    </location>
    <ligand>
        <name>substrate</name>
    </ligand>
</feature>
<feature type="binding site" evidence="1">
    <location>
        <position position="172"/>
    </location>
    <ligand>
        <name>Zn(2+)</name>
        <dbReference type="ChEBI" id="CHEBI:29105"/>
    </ligand>
</feature>
<feature type="binding site" evidence="1">
    <location>
        <position position="180"/>
    </location>
    <ligand>
        <name>Zn(2+)</name>
        <dbReference type="ChEBI" id="CHEBI:29105"/>
    </ligand>
</feature>
<comment type="function">
    <text evidence="1">Catalyzes the isomerization of sedoheptulose 7-phosphate in D-glycero-D-manno-heptose 7-phosphate.</text>
</comment>
<comment type="catalytic activity">
    <reaction evidence="1">
        <text>2 D-sedoheptulose 7-phosphate = D-glycero-alpha-D-manno-heptose 7-phosphate + D-glycero-beta-D-manno-heptose 7-phosphate</text>
        <dbReference type="Rhea" id="RHEA:27489"/>
        <dbReference type="ChEBI" id="CHEBI:57483"/>
        <dbReference type="ChEBI" id="CHEBI:60203"/>
        <dbReference type="ChEBI" id="CHEBI:60204"/>
        <dbReference type="EC" id="5.3.1.28"/>
    </reaction>
</comment>
<comment type="cofactor">
    <cofactor evidence="1">
        <name>Zn(2+)</name>
        <dbReference type="ChEBI" id="CHEBI:29105"/>
    </cofactor>
    <text evidence="1">Binds 1 zinc ion per subunit.</text>
</comment>
<comment type="pathway">
    <text evidence="1">Carbohydrate biosynthesis; D-glycero-D-manno-heptose 7-phosphate biosynthesis; D-glycero-alpha-D-manno-heptose 7-phosphate and D-glycero-beta-D-manno-heptose 7-phosphate from sedoheptulose 7-phosphate: step 1/1.</text>
</comment>
<comment type="subunit">
    <text evidence="1">Homotetramer.</text>
</comment>
<comment type="subcellular location">
    <subcellularLocation>
        <location evidence="1">Cytoplasm</location>
    </subcellularLocation>
</comment>
<comment type="miscellaneous">
    <text evidence="1">The reaction produces a racemic mixture of D-glycero-alpha-D-manno-heptose 7-phosphate and D-glycero-beta-D-manno-heptose 7-phosphate.</text>
</comment>
<comment type="similarity">
    <text evidence="1">Belongs to the SIS family. GmhA subfamily.</text>
</comment>
<keyword id="KW-0119">Carbohydrate metabolism</keyword>
<keyword id="KW-0963">Cytoplasm</keyword>
<keyword id="KW-0413">Isomerase</keyword>
<keyword id="KW-0479">Metal-binding</keyword>
<keyword id="KW-0862">Zinc</keyword>
<protein>
    <recommendedName>
        <fullName evidence="1">Phosphoheptose isomerase</fullName>
        <ecNumber evidence="1">5.3.1.28</ecNumber>
    </recommendedName>
    <alternativeName>
        <fullName evidence="1">Sedoheptulose 7-phosphate isomerase</fullName>
    </alternativeName>
</protein>
<dbReference type="EC" id="5.3.1.28" evidence="1"/>
<dbReference type="EMBL" id="AE013218">
    <property type="protein sequence ID" value="AAM67800.1"/>
    <property type="molecule type" value="Genomic_DNA"/>
</dbReference>
<dbReference type="RefSeq" id="WP_011053767.1">
    <property type="nucleotide sequence ID" value="NC_004061.1"/>
</dbReference>
<dbReference type="SMR" id="Q8K9R9"/>
<dbReference type="STRING" id="198804.BUsg_241"/>
<dbReference type="GeneID" id="93003711"/>
<dbReference type="KEGG" id="bas:BUsg_241"/>
<dbReference type="eggNOG" id="COG0279">
    <property type="taxonomic scope" value="Bacteria"/>
</dbReference>
<dbReference type="HOGENOM" id="CLU_080999_4_0_6"/>
<dbReference type="UniPathway" id="UPA00041">
    <property type="reaction ID" value="UER00436"/>
</dbReference>
<dbReference type="Proteomes" id="UP000000416">
    <property type="component" value="Chromosome"/>
</dbReference>
<dbReference type="GO" id="GO:0005737">
    <property type="term" value="C:cytoplasm"/>
    <property type="evidence" value="ECO:0007669"/>
    <property type="project" value="UniProtKB-SubCell"/>
</dbReference>
<dbReference type="GO" id="GO:0097367">
    <property type="term" value="F:carbohydrate derivative binding"/>
    <property type="evidence" value="ECO:0007669"/>
    <property type="project" value="InterPro"/>
</dbReference>
<dbReference type="GO" id="GO:0008968">
    <property type="term" value="F:D-sedoheptulose 7-phosphate isomerase activity"/>
    <property type="evidence" value="ECO:0007669"/>
    <property type="project" value="UniProtKB-UniRule"/>
</dbReference>
<dbReference type="GO" id="GO:0008270">
    <property type="term" value="F:zinc ion binding"/>
    <property type="evidence" value="ECO:0007669"/>
    <property type="project" value="UniProtKB-UniRule"/>
</dbReference>
<dbReference type="GO" id="GO:0005975">
    <property type="term" value="P:carbohydrate metabolic process"/>
    <property type="evidence" value="ECO:0007669"/>
    <property type="project" value="UniProtKB-UniRule"/>
</dbReference>
<dbReference type="GO" id="GO:2001061">
    <property type="term" value="P:D-glycero-D-manno-heptose 7-phosphate biosynthetic process"/>
    <property type="evidence" value="ECO:0007669"/>
    <property type="project" value="UniProtKB-UniPathway"/>
</dbReference>
<dbReference type="CDD" id="cd05006">
    <property type="entry name" value="SIS_GmhA"/>
    <property type="match status" value="1"/>
</dbReference>
<dbReference type="Gene3D" id="3.40.50.10490">
    <property type="entry name" value="Glucose-6-phosphate isomerase like protein, domain 1"/>
    <property type="match status" value="1"/>
</dbReference>
<dbReference type="HAMAP" id="MF_00067">
    <property type="entry name" value="GmhA"/>
    <property type="match status" value="1"/>
</dbReference>
<dbReference type="InterPro" id="IPR035461">
    <property type="entry name" value="GmhA/DiaA"/>
</dbReference>
<dbReference type="InterPro" id="IPR004515">
    <property type="entry name" value="Phosphoheptose_Isoase"/>
</dbReference>
<dbReference type="InterPro" id="IPR001347">
    <property type="entry name" value="SIS_dom"/>
</dbReference>
<dbReference type="InterPro" id="IPR046348">
    <property type="entry name" value="SIS_dom_sf"/>
</dbReference>
<dbReference type="InterPro" id="IPR050099">
    <property type="entry name" value="SIS_GmhA/DiaA_subfam"/>
</dbReference>
<dbReference type="NCBIfam" id="TIGR00441">
    <property type="entry name" value="gmhA"/>
    <property type="match status" value="1"/>
</dbReference>
<dbReference type="NCBIfam" id="NF001628">
    <property type="entry name" value="PRK00414.1"/>
    <property type="match status" value="1"/>
</dbReference>
<dbReference type="PANTHER" id="PTHR30390:SF7">
    <property type="entry name" value="PHOSPHOHEPTOSE ISOMERASE"/>
    <property type="match status" value="1"/>
</dbReference>
<dbReference type="PANTHER" id="PTHR30390">
    <property type="entry name" value="SEDOHEPTULOSE 7-PHOSPHATE ISOMERASE / DNAA INITIATOR-ASSOCIATING FACTOR FOR REPLICATION INITIATION"/>
    <property type="match status" value="1"/>
</dbReference>
<dbReference type="Pfam" id="PF13580">
    <property type="entry name" value="SIS_2"/>
    <property type="match status" value="1"/>
</dbReference>
<dbReference type="SUPFAM" id="SSF53697">
    <property type="entry name" value="SIS domain"/>
    <property type="match status" value="1"/>
</dbReference>
<dbReference type="PROSITE" id="PS51464">
    <property type="entry name" value="SIS"/>
    <property type="match status" value="1"/>
</dbReference>
<proteinExistence type="inferred from homology"/>
<sequence>MYKKIISSELDAALKILKNFLKNEEQIENIEKAAILIAKSFKNKNKVISCGNGGSHCDAVHFSEELTGLYREKRPGYAAIPISDVGHISAIGNDFGYDQIFSRYIESIGLPNDVLLAISTSGNSINIINAIQTAHRKKMKVIVLTGNDGGQVKHLSDVEICIPYHGYSDRIQEMHIKIIHILILIIEKEMKKIN</sequence>
<name>GMHA_BUCAP</name>